<protein>
    <recommendedName>
        <fullName>Retinal homeobox protein Rx-B</fullName>
    </recommendedName>
    <alternativeName>
        <fullName>Retina and anterior neural fold homeobox protein B</fullName>
    </alternativeName>
    <alternativeName>
        <fullName>Rx2A</fullName>
        <shortName>Xrx2</shortName>
    </alternativeName>
</protein>
<keyword id="KW-0217">Developmental protein</keyword>
<keyword id="KW-0238">DNA-binding</keyword>
<keyword id="KW-0371">Homeobox</keyword>
<keyword id="KW-0539">Nucleus</keyword>
<keyword id="KW-1185">Reference proteome</keyword>
<keyword id="KW-0804">Transcription</keyword>
<keyword id="KW-0805">Transcription regulation</keyword>
<gene>
    <name type="primary">rax-b</name>
    <name type="synonym">rx2</name>
    <name type="synonym">rx2a</name>
</gene>
<dbReference type="EMBL" id="AF001049">
    <property type="protein sequence ID" value="AAB62323.1"/>
    <property type="molecule type" value="mRNA"/>
</dbReference>
<dbReference type="EMBL" id="BC123153">
    <property type="protein sequence ID" value="AAI23154.1"/>
    <property type="molecule type" value="mRNA"/>
</dbReference>
<dbReference type="RefSeq" id="NP_001081689.1">
    <property type="nucleotide sequence ID" value="NM_001088220.1"/>
</dbReference>
<dbReference type="SMR" id="O42567"/>
<dbReference type="DNASU" id="397999"/>
<dbReference type="GeneID" id="397999"/>
<dbReference type="KEGG" id="xla:397999"/>
<dbReference type="AGR" id="Xenbase:XB-GENE-866185"/>
<dbReference type="CTD" id="397999"/>
<dbReference type="Xenbase" id="XB-GENE-866185">
    <property type="gene designation" value="rax.L"/>
</dbReference>
<dbReference type="OMA" id="YCTKHSD"/>
<dbReference type="OrthoDB" id="6159439at2759"/>
<dbReference type="Proteomes" id="UP000186698">
    <property type="component" value="Chromosome 1L"/>
</dbReference>
<dbReference type="Bgee" id="397999">
    <property type="expression patterns" value="Expressed in camera-type eye and 2 other cell types or tissues"/>
</dbReference>
<dbReference type="GO" id="GO:0005634">
    <property type="term" value="C:nucleus"/>
    <property type="evidence" value="ECO:0007669"/>
    <property type="project" value="UniProtKB-SubCell"/>
</dbReference>
<dbReference type="GO" id="GO:0000981">
    <property type="term" value="F:DNA-binding transcription factor activity, RNA polymerase II-specific"/>
    <property type="evidence" value="ECO:0000318"/>
    <property type="project" value="GO_Central"/>
</dbReference>
<dbReference type="GO" id="GO:0000978">
    <property type="term" value="F:RNA polymerase II cis-regulatory region sequence-specific DNA binding"/>
    <property type="evidence" value="ECO:0000318"/>
    <property type="project" value="GO_Central"/>
</dbReference>
<dbReference type="GO" id="GO:0045944">
    <property type="term" value="P:positive regulation of transcription by RNA polymerase II"/>
    <property type="evidence" value="ECO:0007669"/>
    <property type="project" value="InterPro"/>
</dbReference>
<dbReference type="GO" id="GO:0006357">
    <property type="term" value="P:regulation of transcription by RNA polymerase II"/>
    <property type="evidence" value="ECO:0000318"/>
    <property type="project" value="GO_Central"/>
</dbReference>
<dbReference type="CDD" id="cd00086">
    <property type="entry name" value="homeodomain"/>
    <property type="match status" value="1"/>
</dbReference>
<dbReference type="FunFam" id="1.10.10.60:FF:000071">
    <property type="entry name" value="Retinal homeobox gene 2"/>
    <property type="match status" value="1"/>
</dbReference>
<dbReference type="Gene3D" id="1.10.10.60">
    <property type="entry name" value="Homeodomain-like"/>
    <property type="match status" value="1"/>
</dbReference>
<dbReference type="InterPro" id="IPR001356">
    <property type="entry name" value="HD"/>
</dbReference>
<dbReference type="InterPro" id="IPR017970">
    <property type="entry name" value="Homeobox_CS"/>
</dbReference>
<dbReference type="InterPro" id="IPR009057">
    <property type="entry name" value="Homeodomain-like_sf"/>
</dbReference>
<dbReference type="InterPro" id="IPR003654">
    <property type="entry name" value="OAR_dom"/>
</dbReference>
<dbReference type="InterPro" id="IPR043562">
    <property type="entry name" value="RAX/RAX2"/>
</dbReference>
<dbReference type="PANTHER" id="PTHR46271">
    <property type="entry name" value="HOMEOBOX PROTEIN, PUTATIVE-RELATED"/>
    <property type="match status" value="1"/>
</dbReference>
<dbReference type="PANTHER" id="PTHR46271:SF3">
    <property type="entry name" value="RETINAL HOMEOBOX PROTEIN RX"/>
    <property type="match status" value="1"/>
</dbReference>
<dbReference type="Pfam" id="PF00046">
    <property type="entry name" value="Homeodomain"/>
    <property type="match status" value="1"/>
</dbReference>
<dbReference type="Pfam" id="PF03826">
    <property type="entry name" value="OAR"/>
    <property type="match status" value="1"/>
</dbReference>
<dbReference type="SMART" id="SM00389">
    <property type="entry name" value="HOX"/>
    <property type="match status" value="1"/>
</dbReference>
<dbReference type="SUPFAM" id="SSF46689">
    <property type="entry name" value="Homeodomain-like"/>
    <property type="match status" value="1"/>
</dbReference>
<dbReference type="PROSITE" id="PS00027">
    <property type="entry name" value="HOMEOBOX_1"/>
    <property type="match status" value="1"/>
</dbReference>
<dbReference type="PROSITE" id="PS50071">
    <property type="entry name" value="HOMEOBOX_2"/>
    <property type="match status" value="1"/>
</dbReference>
<dbReference type="PROSITE" id="PS50803">
    <property type="entry name" value="OAR"/>
    <property type="match status" value="1"/>
</dbReference>
<evidence type="ECO:0000250" key="1"/>
<evidence type="ECO:0000255" key="2"/>
<evidence type="ECO:0000255" key="3">
    <source>
        <dbReference type="PROSITE-ProRule" id="PRU00108"/>
    </source>
</evidence>
<evidence type="ECO:0000255" key="4">
    <source>
        <dbReference type="PROSITE-ProRule" id="PRU00138"/>
    </source>
</evidence>
<evidence type="ECO:0000256" key="5">
    <source>
        <dbReference type="SAM" id="MobiDB-lite"/>
    </source>
</evidence>
<evidence type="ECO:0000269" key="6">
    <source>
    </source>
</evidence>
<evidence type="ECO:0000305" key="7"/>
<feature type="chain" id="PRO_0000049279" description="Retinal homeobox protein Rx-B">
    <location>
        <begin position="1"/>
        <end position="325"/>
    </location>
</feature>
<feature type="DNA-binding region" description="Homeobox" evidence="3">
    <location>
        <begin position="130"/>
        <end position="189"/>
    </location>
</feature>
<feature type="region of interest" description="Disordered" evidence="5">
    <location>
        <begin position="75"/>
        <end position="136"/>
    </location>
</feature>
<feature type="short sequence motif" description="Octapeptide motif">
    <location>
        <begin position="32"/>
        <end position="39"/>
    </location>
</feature>
<feature type="short sequence motif" description="OAR" evidence="4">
    <location>
        <begin position="302"/>
        <end position="315"/>
    </location>
</feature>
<feature type="short sequence motif" description="Nuclear localization signal" evidence="2">
    <location>
        <begin position="308"/>
        <end position="312"/>
    </location>
</feature>
<feature type="compositionally biased region" description="Basic and acidic residues" evidence="5">
    <location>
        <begin position="75"/>
        <end position="87"/>
    </location>
</feature>
<feature type="compositionally biased region" description="Polar residues" evidence="5">
    <location>
        <begin position="99"/>
        <end position="117"/>
    </location>
</feature>
<feature type="sequence conflict" description="In Ref. 1; AAB62323." evidence="7" ref="1">
    <original>F</original>
    <variation>Y</variation>
    <location>
        <position position="288"/>
    </location>
</feature>
<comment type="function">
    <text evidence="1">Plays a critical role in eye formation by regulating the initial specification of retinal cells and/or their subsequent proliferation.</text>
</comment>
<comment type="subcellular location">
    <subcellularLocation>
        <location evidence="3 4">Nucleus</location>
    </subcellularLocation>
</comment>
<comment type="tissue specificity">
    <text evidence="6">Highly expressed in anterior neural plate followed by neural retina, pigmented epithelium, in pineal gland, diencephalon floor and epiphysis. At later stages, the neuroretina remains the primary site of expression. No expression in the developing lens and cornea.</text>
</comment>
<comment type="developmental stage">
    <text evidence="6">Expression begins in stage 11 (late-gastrula) embryos and then appears to be maintained at fairly stable levels up to stage 45 (late tadpole), when it declines.</text>
</comment>
<comment type="similarity">
    <text evidence="7">Belongs to the paired homeobox family. Bicoid subfamily.</text>
</comment>
<comment type="caution">
    <text evidence="7">It is uncertain whether Met-1 or Met-9 is the initiator.</text>
</comment>
<proteinExistence type="evidence at transcript level"/>
<reference key="1">
    <citation type="journal article" date="1997" name="Nature">
        <title>The Rx homeobox gene is essential for vertebrate eye development.</title>
        <authorList>
            <person name="Mathers P.H."/>
            <person name="Grinberg A."/>
            <person name="Mahon K.A."/>
            <person name="Jamrich M."/>
        </authorList>
    </citation>
    <scope>NUCLEOTIDE SEQUENCE [MRNA]</scope>
    <scope>TISSUE SPECIFICITY</scope>
    <scope>DEVELOPMENTAL STAGE</scope>
    <source>
        <tissue>Ectoderm</tissue>
    </source>
</reference>
<reference key="2">
    <citation type="submission" date="2006-09" db="EMBL/GenBank/DDBJ databases">
        <authorList>
            <consortium name="NIH - Xenopus Gene Collection (XGC) project"/>
        </authorList>
    </citation>
    <scope>NUCLEOTIDE SEQUENCE [LARGE SCALE MRNA]</scope>
    <source>
        <tissue>Neurula</tissue>
    </source>
</reference>
<sequence length="325" mass="36314">MHLHSPPLMADGSFSLSGHLLRSPGGNPSRLHSIEAILGFAKEDSVLGSFQSEVSPRNAKEVDKRSSRHCLHKMTEEIHPQQEHLEDGQTGGYGDPYSAKTSSECLSPGLSTSNSDNKLSDDEQQPKKKHRRNRTTFTTYQLHELERAFEKSHYPDVYSREELAMKVNLPEVRVQVWFQNRRAKWRRQEKLEVTSMKLQDSPMLSFNRSPQPSAMSALSSSLPLDSWLTPPLSNSTALQSLPGFVTTPTSLPGSYTPPPFINPASMGHALQPLGAMGPPPPYQCGANFVDKYPLEEIDPRNNSIASLRMKAKEHIQSFGKPWQTI</sequence>
<name>RXB_XENLA</name>
<organism>
    <name type="scientific">Xenopus laevis</name>
    <name type="common">African clawed frog</name>
    <dbReference type="NCBI Taxonomy" id="8355"/>
    <lineage>
        <taxon>Eukaryota</taxon>
        <taxon>Metazoa</taxon>
        <taxon>Chordata</taxon>
        <taxon>Craniata</taxon>
        <taxon>Vertebrata</taxon>
        <taxon>Euteleostomi</taxon>
        <taxon>Amphibia</taxon>
        <taxon>Batrachia</taxon>
        <taxon>Anura</taxon>
        <taxon>Pipoidea</taxon>
        <taxon>Pipidae</taxon>
        <taxon>Xenopodinae</taxon>
        <taxon>Xenopus</taxon>
        <taxon>Xenopus</taxon>
    </lineage>
</organism>
<accession>O42567</accession>
<accession>Q0IHH4</accession>